<reference key="1">
    <citation type="journal article" date="2007" name="Genome Res.">
        <title>Reductive evolution and niche adaptation inferred from the genome of Mycobacterium ulcerans, the causative agent of Buruli ulcer.</title>
        <authorList>
            <person name="Stinear T.P."/>
            <person name="Seemann T."/>
            <person name="Pidot S."/>
            <person name="Frigui W."/>
            <person name="Reysset G."/>
            <person name="Garnier T."/>
            <person name="Meurice G."/>
            <person name="Simon D."/>
            <person name="Bouchier C."/>
            <person name="Ma L."/>
            <person name="Tichit M."/>
            <person name="Porter J.L."/>
            <person name="Ryan J."/>
            <person name="Johnson P.D.R."/>
            <person name="Davies J.K."/>
            <person name="Jenkin G.A."/>
            <person name="Small P.L.C."/>
            <person name="Jones L.M."/>
            <person name="Tekaia F."/>
            <person name="Laval F."/>
            <person name="Daffe M."/>
            <person name="Parkhill J."/>
            <person name="Cole S.T."/>
        </authorList>
    </citation>
    <scope>NUCLEOTIDE SEQUENCE [LARGE SCALE GENOMIC DNA]</scope>
    <source>
        <strain>Agy99</strain>
    </source>
</reference>
<feature type="chain" id="PRO_1000021140" description="4-hydroxy-3-methylbut-2-enyl diphosphate reductase">
    <location>
        <begin position="1"/>
        <end position="332"/>
    </location>
</feature>
<feature type="active site" description="Proton donor" evidence="1">
    <location>
        <position position="148"/>
    </location>
</feature>
<feature type="binding site" evidence="1">
    <location>
        <position position="34"/>
    </location>
    <ligand>
        <name>[4Fe-4S] cluster</name>
        <dbReference type="ChEBI" id="CHEBI:49883"/>
    </ligand>
</feature>
<feature type="binding site" evidence="1">
    <location>
        <position position="63"/>
    </location>
    <ligand>
        <name>(2E)-4-hydroxy-3-methylbut-2-enyl diphosphate</name>
        <dbReference type="ChEBI" id="CHEBI:128753"/>
    </ligand>
</feature>
<feature type="binding site" evidence="1">
    <location>
        <position position="63"/>
    </location>
    <ligand>
        <name>dimethylallyl diphosphate</name>
        <dbReference type="ChEBI" id="CHEBI:57623"/>
    </ligand>
</feature>
<feature type="binding site" evidence="1">
    <location>
        <position position="63"/>
    </location>
    <ligand>
        <name>isopentenyl diphosphate</name>
        <dbReference type="ChEBI" id="CHEBI:128769"/>
    </ligand>
</feature>
<feature type="binding site" evidence="1">
    <location>
        <position position="96"/>
    </location>
    <ligand>
        <name>(2E)-4-hydroxy-3-methylbut-2-enyl diphosphate</name>
        <dbReference type="ChEBI" id="CHEBI:128753"/>
    </ligand>
</feature>
<feature type="binding site" evidence="1">
    <location>
        <position position="96"/>
    </location>
    <ligand>
        <name>dimethylallyl diphosphate</name>
        <dbReference type="ChEBI" id="CHEBI:57623"/>
    </ligand>
</feature>
<feature type="binding site" evidence="1">
    <location>
        <position position="96"/>
    </location>
    <ligand>
        <name>isopentenyl diphosphate</name>
        <dbReference type="ChEBI" id="CHEBI:128769"/>
    </ligand>
</feature>
<feature type="binding site" evidence="1">
    <location>
        <position position="118"/>
    </location>
    <ligand>
        <name>[4Fe-4S] cluster</name>
        <dbReference type="ChEBI" id="CHEBI:49883"/>
    </ligand>
</feature>
<feature type="binding site" evidence="1">
    <location>
        <position position="146"/>
    </location>
    <ligand>
        <name>(2E)-4-hydroxy-3-methylbut-2-enyl diphosphate</name>
        <dbReference type="ChEBI" id="CHEBI:128753"/>
    </ligand>
</feature>
<feature type="binding site" evidence="1">
    <location>
        <position position="146"/>
    </location>
    <ligand>
        <name>dimethylallyl diphosphate</name>
        <dbReference type="ChEBI" id="CHEBI:57623"/>
    </ligand>
</feature>
<feature type="binding site" evidence="1">
    <location>
        <position position="146"/>
    </location>
    <ligand>
        <name>isopentenyl diphosphate</name>
        <dbReference type="ChEBI" id="CHEBI:128769"/>
    </ligand>
</feature>
<feature type="binding site" evidence="1">
    <location>
        <position position="186"/>
    </location>
    <ligand>
        <name>(2E)-4-hydroxy-3-methylbut-2-enyl diphosphate</name>
        <dbReference type="ChEBI" id="CHEBI:128753"/>
    </ligand>
</feature>
<feature type="binding site" evidence="1">
    <location>
        <position position="216"/>
    </location>
    <ligand>
        <name>[4Fe-4S] cluster</name>
        <dbReference type="ChEBI" id="CHEBI:49883"/>
    </ligand>
</feature>
<feature type="binding site" evidence="1">
    <location>
        <position position="244"/>
    </location>
    <ligand>
        <name>(2E)-4-hydroxy-3-methylbut-2-enyl diphosphate</name>
        <dbReference type="ChEBI" id="CHEBI:128753"/>
    </ligand>
</feature>
<feature type="binding site" evidence="1">
    <location>
        <position position="244"/>
    </location>
    <ligand>
        <name>dimethylallyl diphosphate</name>
        <dbReference type="ChEBI" id="CHEBI:57623"/>
    </ligand>
</feature>
<feature type="binding site" evidence="1">
    <location>
        <position position="244"/>
    </location>
    <ligand>
        <name>isopentenyl diphosphate</name>
        <dbReference type="ChEBI" id="CHEBI:128769"/>
    </ligand>
</feature>
<feature type="binding site" evidence="1">
    <location>
        <position position="245"/>
    </location>
    <ligand>
        <name>(2E)-4-hydroxy-3-methylbut-2-enyl diphosphate</name>
        <dbReference type="ChEBI" id="CHEBI:128753"/>
    </ligand>
</feature>
<feature type="binding site" evidence="1">
    <location>
        <position position="245"/>
    </location>
    <ligand>
        <name>dimethylallyl diphosphate</name>
        <dbReference type="ChEBI" id="CHEBI:57623"/>
    </ligand>
</feature>
<feature type="binding site" evidence="1">
    <location>
        <position position="245"/>
    </location>
    <ligand>
        <name>isopentenyl diphosphate</name>
        <dbReference type="ChEBI" id="CHEBI:128769"/>
    </ligand>
</feature>
<feature type="binding site" evidence="1">
    <location>
        <position position="246"/>
    </location>
    <ligand>
        <name>(2E)-4-hydroxy-3-methylbut-2-enyl diphosphate</name>
        <dbReference type="ChEBI" id="CHEBI:128753"/>
    </ligand>
</feature>
<feature type="binding site" evidence="1">
    <location>
        <position position="246"/>
    </location>
    <ligand>
        <name>dimethylallyl diphosphate</name>
        <dbReference type="ChEBI" id="CHEBI:57623"/>
    </ligand>
</feature>
<feature type="binding site" evidence="1">
    <location>
        <position position="246"/>
    </location>
    <ligand>
        <name>isopentenyl diphosphate</name>
        <dbReference type="ChEBI" id="CHEBI:128769"/>
    </ligand>
</feature>
<feature type="binding site" evidence="1">
    <location>
        <position position="289"/>
    </location>
    <ligand>
        <name>(2E)-4-hydroxy-3-methylbut-2-enyl diphosphate</name>
        <dbReference type="ChEBI" id="CHEBI:128753"/>
    </ligand>
</feature>
<feature type="binding site" evidence="1">
    <location>
        <position position="289"/>
    </location>
    <ligand>
        <name>dimethylallyl diphosphate</name>
        <dbReference type="ChEBI" id="CHEBI:57623"/>
    </ligand>
</feature>
<feature type="binding site" evidence="1">
    <location>
        <position position="289"/>
    </location>
    <ligand>
        <name>isopentenyl diphosphate</name>
        <dbReference type="ChEBI" id="CHEBI:128769"/>
    </ligand>
</feature>
<gene>
    <name evidence="1" type="primary">ispH</name>
    <name type="ordered locus">MUL_0168</name>
</gene>
<organism>
    <name type="scientific">Mycobacterium ulcerans (strain Agy99)</name>
    <dbReference type="NCBI Taxonomy" id="362242"/>
    <lineage>
        <taxon>Bacteria</taxon>
        <taxon>Bacillati</taxon>
        <taxon>Actinomycetota</taxon>
        <taxon>Actinomycetes</taxon>
        <taxon>Mycobacteriales</taxon>
        <taxon>Mycobacteriaceae</taxon>
        <taxon>Mycobacterium</taxon>
        <taxon>Mycobacterium ulcerans group</taxon>
    </lineage>
</organism>
<evidence type="ECO:0000255" key="1">
    <source>
        <dbReference type="HAMAP-Rule" id="MF_00191"/>
    </source>
</evidence>
<protein>
    <recommendedName>
        <fullName evidence="1">4-hydroxy-3-methylbut-2-enyl diphosphate reductase</fullName>
        <shortName evidence="1">HMBPP reductase</shortName>
        <ecNumber evidence="1">1.17.7.4</ecNumber>
    </recommendedName>
</protein>
<name>ISPH_MYCUA</name>
<accession>A0PKQ3</accession>
<keyword id="KW-0004">4Fe-4S</keyword>
<keyword id="KW-0408">Iron</keyword>
<keyword id="KW-0411">Iron-sulfur</keyword>
<keyword id="KW-0414">Isoprene biosynthesis</keyword>
<keyword id="KW-0479">Metal-binding</keyword>
<keyword id="KW-0560">Oxidoreductase</keyword>
<proteinExistence type="inferred from homology"/>
<sequence length="332" mass="35974">MVPTIDMGIPGASSSVAHVPTRRRVLLAEPRGYCAGVDRAVETVERALEKHGPPVYVRHEIVHNRHVVDTLAKAGAVFVEETDQVPEGAIVVFSAHGVAPTVYAAAAERNLQTIDATCPLVTKVHNEARRFARNDYDILLIGHEGHEEVVGTAGEAPEHVQLVDGLDGVERVTIRDEDKVVWLSQTTLSVDETMEIVARLRQRFAKLQDPPSDDICYATQNRQVAVKAMAPECDLVLVVGSRNSSNSVRLVEVALGAGAEAAYLVDWADDIDQSWLQGVTTVGVTSGASVPEVLVRGVLERLAESGYDMVQPVTTANETLVFALPREIRPAR</sequence>
<dbReference type="EC" id="1.17.7.4" evidence="1"/>
<dbReference type="EMBL" id="CP000325">
    <property type="protein sequence ID" value="ABL02922.1"/>
    <property type="molecule type" value="Genomic_DNA"/>
</dbReference>
<dbReference type="RefSeq" id="WP_011738547.1">
    <property type="nucleotide sequence ID" value="NC_008611.1"/>
</dbReference>
<dbReference type="SMR" id="A0PKQ3"/>
<dbReference type="KEGG" id="mul:MUL_0168"/>
<dbReference type="eggNOG" id="COG0761">
    <property type="taxonomic scope" value="Bacteria"/>
</dbReference>
<dbReference type="HOGENOM" id="CLU_027486_1_0_11"/>
<dbReference type="UniPathway" id="UPA00056">
    <property type="reaction ID" value="UER00097"/>
</dbReference>
<dbReference type="UniPathway" id="UPA00059">
    <property type="reaction ID" value="UER00105"/>
</dbReference>
<dbReference type="Proteomes" id="UP000000765">
    <property type="component" value="Chromosome"/>
</dbReference>
<dbReference type="GO" id="GO:0051539">
    <property type="term" value="F:4 iron, 4 sulfur cluster binding"/>
    <property type="evidence" value="ECO:0007669"/>
    <property type="project" value="UniProtKB-UniRule"/>
</dbReference>
<dbReference type="GO" id="GO:0051745">
    <property type="term" value="F:4-hydroxy-3-methylbut-2-enyl diphosphate reductase activity"/>
    <property type="evidence" value="ECO:0007669"/>
    <property type="project" value="UniProtKB-UniRule"/>
</dbReference>
<dbReference type="GO" id="GO:0046872">
    <property type="term" value="F:metal ion binding"/>
    <property type="evidence" value="ECO:0007669"/>
    <property type="project" value="UniProtKB-KW"/>
</dbReference>
<dbReference type="GO" id="GO:0050992">
    <property type="term" value="P:dimethylallyl diphosphate biosynthetic process"/>
    <property type="evidence" value="ECO:0007669"/>
    <property type="project" value="UniProtKB-UniRule"/>
</dbReference>
<dbReference type="GO" id="GO:0019288">
    <property type="term" value="P:isopentenyl diphosphate biosynthetic process, methylerythritol 4-phosphate pathway"/>
    <property type="evidence" value="ECO:0007669"/>
    <property type="project" value="UniProtKB-UniRule"/>
</dbReference>
<dbReference type="GO" id="GO:0016114">
    <property type="term" value="P:terpenoid biosynthetic process"/>
    <property type="evidence" value="ECO:0007669"/>
    <property type="project" value="UniProtKB-UniRule"/>
</dbReference>
<dbReference type="CDD" id="cd13944">
    <property type="entry name" value="lytB_ispH"/>
    <property type="match status" value="1"/>
</dbReference>
<dbReference type="Gene3D" id="3.40.50.11270">
    <property type="match status" value="1"/>
</dbReference>
<dbReference type="Gene3D" id="3.40.1010.20">
    <property type="entry name" value="4-hydroxy-3-methylbut-2-enyl diphosphate reductase, catalytic domain"/>
    <property type="match status" value="2"/>
</dbReference>
<dbReference type="HAMAP" id="MF_00191">
    <property type="entry name" value="IspH"/>
    <property type="match status" value="1"/>
</dbReference>
<dbReference type="InterPro" id="IPR003451">
    <property type="entry name" value="LytB/IspH"/>
</dbReference>
<dbReference type="NCBIfam" id="TIGR00216">
    <property type="entry name" value="ispH_lytB"/>
    <property type="match status" value="1"/>
</dbReference>
<dbReference type="NCBIfam" id="NF002188">
    <property type="entry name" value="PRK01045.1-2"/>
    <property type="match status" value="1"/>
</dbReference>
<dbReference type="NCBIfam" id="NF002189">
    <property type="entry name" value="PRK01045.1-3"/>
    <property type="match status" value="1"/>
</dbReference>
<dbReference type="NCBIfam" id="NF002190">
    <property type="entry name" value="PRK01045.1-4"/>
    <property type="match status" value="1"/>
</dbReference>
<dbReference type="PANTHER" id="PTHR30426">
    <property type="entry name" value="4-HYDROXY-3-METHYLBUT-2-ENYL DIPHOSPHATE REDUCTASE"/>
    <property type="match status" value="1"/>
</dbReference>
<dbReference type="PANTHER" id="PTHR30426:SF0">
    <property type="entry name" value="4-HYDROXY-3-METHYLBUT-2-ENYL DIPHOSPHATE REDUCTASE"/>
    <property type="match status" value="1"/>
</dbReference>
<dbReference type="Pfam" id="PF02401">
    <property type="entry name" value="LYTB"/>
    <property type="match status" value="1"/>
</dbReference>
<comment type="function">
    <text evidence="1">Catalyzes the conversion of 1-hydroxy-2-methyl-2-(E)-butenyl 4-diphosphate (HMBPP) into a mixture of isopentenyl diphosphate (IPP) and dimethylallyl diphosphate (DMAPP). Acts in the terminal step of the DOXP/MEP pathway for isoprenoid precursor biosynthesis.</text>
</comment>
<comment type="catalytic activity">
    <reaction evidence="1">
        <text>isopentenyl diphosphate + 2 oxidized [2Fe-2S]-[ferredoxin] + H2O = (2E)-4-hydroxy-3-methylbut-2-enyl diphosphate + 2 reduced [2Fe-2S]-[ferredoxin] + 2 H(+)</text>
        <dbReference type="Rhea" id="RHEA:24488"/>
        <dbReference type="Rhea" id="RHEA-COMP:10000"/>
        <dbReference type="Rhea" id="RHEA-COMP:10001"/>
        <dbReference type="ChEBI" id="CHEBI:15377"/>
        <dbReference type="ChEBI" id="CHEBI:15378"/>
        <dbReference type="ChEBI" id="CHEBI:33737"/>
        <dbReference type="ChEBI" id="CHEBI:33738"/>
        <dbReference type="ChEBI" id="CHEBI:128753"/>
        <dbReference type="ChEBI" id="CHEBI:128769"/>
        <dbReference type="EC" id="1.17.7.4"/>
    </reaction>
</comment>
<comment type="catalytic activity">
    <reaction evidence="1">
        <text>dimethylallyl diphosphate + 2 oxidized [2Fe-2S]-[ferredoxin] + H2O = (2E)-4-hydroxy-3-methylbut-2-enyl diphosphate + 2 reduced [2Fe-2S]-[ferredoxin] + 2 H(+)</text>
        <dbReference type="Rhea" id="RHEA:24825"/>
        <dbReference type="Rhea" id="RHEA-COMP:10000"/>
        <dbReference type="Rhea" id="RHEA-COMP:10001"/>
        <dbReference type="ChEBI" id="CHEBI:15377"/>
        <dbReference type="ChEBI" id="CHEBI:15378"/>
        <dbReference type="ChEBI" id="CHEBI:33737"/>
        <dbReference type="ChEBI" id="CHEBI:33738"/>
        <dbReference type="ChEBI" id="CHEBI:57623"/>
        <dbReference type="ChEBI" id="CHEBI:128753"/>
        <dbReference type="EC" id="1.17.7.4"/>
    </reaction>
</comment>
<comment type="cofactor">
    <cofactor evidence="1">
        <name>[4Fe-4S] cluster</name>
        <dbReference type="ChEBI" id="CHEBI:49883"/>
    </cofactor>
    <text evidence="1">Binds 1 [4Fe-4S] cluster per subunit.</text>
</comment>
<comment type="pathway">
    <text evidence="1">Isoprenoid biosynthesis; dimethylallyl diphosphate biosynthesis; dimethylallyl diphosphate from (2E)-4-hydroxy-3-methylbutenyl diphosphate: step 1/1.</text>
</comment>
<comment type="pathway">
    <text evidence="1">Isoprenoid biosynthesis; isopentenyl diphosphate biosynthesis via DXP pathway; isopentenyl diphosphate from 1-deoxy-D-xylulose 5-phosphate: step 6/6.</text>
</comment>
<comment type="similarity">
    <text evidence="1">Belongs to the IspH family.</text>
</comment>